<proteinExistence type="evidence at transcript level"/>
<reference key="1">
    <citation type="journal article" date="1992" name="J. Mol. Evol.">
        <title>A comparison of evolutionary rates of the two major kinds of superoxide dismutase.</title>
        <authorList>
            <person name="Smith M.W."/>
            <person name="Doolittle R.F."/>
        </authorList>
    </citation>
    <scope>NUCLEOTIDE SEQUENCE [MRNA]</scope>
    <source>
        <tissue>Liver</tissue>
    </source>
</reference>
<organism>
    <name type="scientific">Eptatretus stoutii</name>
    <name type="common">Pacific hagfish</name>
    <dbReference type="NCBI Taxonomy" id="7765"/>
    <lineage>
        <taxon>Eukaryota</taxon>
        <taxon>Metazoa</taxon>
        <taxon>Chordata</taxon>
        <taxon>Craniata</taxon>
        <taxon>Vertebrata</taxon>
        <taxon>Cyclostomata</taxon>
        <taxon>Myxini</taxon>
        <taxon>Myxiniformes</taxon>
        <taxon>Myxinidae</taxon>
        <taxon>Eptatretinae</taxon>
        <taxon>Eptatretus</taxon>
    </lineage>
</organism>
<protein>
    <recommendedName>
        <fullName>Superoxide dismutase [Mn], mitochondrial</fullName>
        <ecNumber>1.15.1.1</ecNumber>
    </recommendedName>
</protein>
<name>SODM_EPTST</name>
<evidence type="ECO:0000250" key="1"/>
<evidence type="ECO:0000305" key="2"/>
<accession>P28762</accession>
<sequence>HISAEIMQLHHSKHHAAYVNNVNVVEEKLAEALGKGDVNTQVSLQPAFRFNGGGHINHSIFWRNLSPSGGGQPCGDLLKAIENDFGSVDKLREKLVAAAVGVQGSGWAWLGFNKESKRLQIATCANQDPLQGTTGLFPLLGIDV</sequence>
<comment type="function">
    <text>Destroys superoxide anion radicals which are normally produced within the cells and which are toxic to biological systems.</text>
</comment>
<comment type="catalytic activity">
    <reaction>
        <text>2 superoxide + 2 H(+) = H2O2 + O2</text>
        <dbReference type="Rhea" id="RHEA:20696"/>
        <dbReference type="ChEBI" id="CHEBI:15378"/>
        <dbReference type="ChEBI" id="CHEBI:15379"/>
        <dbReference type="ChEBI" id="CHEBI:16240"/>
        <dbReference type="ChEBI" id="CHEBI:18421"/>
        <dbReference type="EC" id="1.15.1.1"/>
    </reaction>
</comment>
<comment type="cofactor">
    <cofactor evidence="1">
        <name>Mn(2+)</name>
        <dbReference type="ChEBI" id="CHEBI:29035"/>
    </cofactor>
    <text evidence="1">Binds 1 Mn(2+) ion per subunit.</text>
</comment>
<comment type="subunit">
    <text>Homotetramer.</text>
</comment>
<comment type="subcellular location">
    <subcellularLocation>
        <location>Mitochondrion matrix</location>
    </subcellularLocation>
</comment>
<comment type="similarity">
    <text evidence="2">Belongs to the iron/manganese superoxide dismutase family.</text>
</comment>
<dbReference type="EC" id="1.15.1.1"/>
<dbReference type="EMBL" id="X64058">
    <property type="protein sequence ID" value="CAA45414.1"/>
    <property type="molecule type" value="mRNA"/>
</dbReference>
<dbReference type="PIR" id="S23656">
    <property type="entry name" value="S23656"/>
</dbReference>
<dbReference type="SMR" id="P28762"/>
<dbReference type="GO" id="GO:0005759">
    <property type="term" value="C:mitochondrial matrix"/>
    <property type="evidence" value="ECO:0007669"/>
    <property type="project" value="UniProtKB-SubCell"/>
</dbReference>
<dbReference type="GO" id="GO:0030145">
    <property type="term" value="F:manganese ion binding"/>
    <property type="evidence" value="ECO:0007669"/>
    <property type="project" value="TreeGrafter"/>
</dbReference>
<dbReference type="GO" id="GO:0004784">
    <property type="term" value="F:superoxide dismutase activity"/>
    <property type="evidence" value="ECO:0007669"/>
    <property type="project" value="UniProtKB-EC"/>
</dbReference>
<dbReference type="FunFam" id="1.10.287.990:FF:000001">
    <property type="entry name" value="Superoxide dismutase"/>
    <property type="match status" value="1"/>
</dbReference>
<dbReference type="Gene3D" id="1.10.287.990">
    <property type="entry name" value="Fe,Mn superoxide dismutase (SOD) domain"/>
    <property type="match status" value="1"/>
</dbReference>
<dbReference type="Gene3D" id="3.55.40.20">
    <property type="entry name" value="Iron/manganese superoxide dismutase, C-terminal domain"/>
    <property type="match status" value="1"/>
</dbReference>
<dbReference type="InterPro" id="IPR050265">
    <property type="entry name" value="Fe/Mn_Superoxide_Dismutase"/>
</dbReference>
<dbReference type="InterPro" id="IPR001189">
    <property type="entry name" value="Mn/Fe_SOD"/>
</dbReference>
<dbReference type="InterPro" id="IPR019832">
    <property type="entry name" value="Mn/Fe_SOD_C"/>
</dbReference>
<dbReference type="InterPro" id="IPR019831">
    <property type="entry name" value="Mn/Fe_SOD_N"/>
</dbReference>
<dbReference type="InterPro" id="IPR036324">
    <property type="entry name" value="Mn/Fe_SOD_N_sf"/>
</dbReference>
<dbReference type="InterPro" id="IPR036314">
    <property type="entry name" value="SOD_C_sf"/>
</dbReference>
<dbReference type="PANTHER" id="PTHR11404">
    <property type="entry name" value="SUPEROXIDE DISMUTASE 2"/>
    <property type="match status" value="1"/>
</dbReference>
<dbReference type="PANTHER" id="PTHR11404:SF6">
    <property type="entry name" value="SUPEROXIDE DISMUTASE [MN], MITOCHONDRIAL"/>
    <property type="match status" value="1"/>
</dbReference>
<dbReference type="Pfam" id="PF02777">
    <property type="entry name" value="Sod_Fe_C"/>
    <property type="match status" value="1"/>
</dbReference>
<dbReference type="Pfam" id="PF00081">
    <property type="entry name" value="Sod_Fe_N"/>
    <property type="match status" value="1"/>
</dbReference>
<dbReference type="PRINTS" id="PR01703">
    <property type="entry name" value="MNSODISMTASE"/>
</dbReference>
<dbReference type="SUPFAM" id="SSF54719">
    <property type="entry name" value="Fe,Mn superoxide dismutase (SOD), C-terminal domain"/>
    <property type="match status" value="1"/>
</dbReference>
<dbReference type="SUPFAM" id="SSF46609">
    <property type="entry name" value="Fe,Mn superoxide dismutase (SOD), N-terminal domain"/>
    <property type="match status" value="1"/>
</dbReference>
<feature type="chain" id="PRO_0000159959" description="Superoxide dismutase [Mn], mitochondrial">
    <location>
        <begin position="1" status="less than"/>
        <end position="144" status="greater than"/>
    </location>
</feature>
<feature type="binding site" evidence="1">
    <location>
        <position position="10"/>
    </location>
    <ligand>
        <name>Mn(2+)</name>
        <dbReference type="ChEBI" id="CHEBI:29035"/>
    </ligand>
</feature>
<feature type="binding site" evidence="1">
    <location>
        <position position="58"/>
    </location>
    <ligand>
        <name>Mn(2+)</name>
        <dbReference type="ChEBI" id="CHEBI:29035"/>
    </ligand>
</feature>
<feature type="binding site" evidence="1">
    <location>
        <position position="143"/>
    </location>
    <ligand>
        <name>Mn(2+)</name>
        <dbReference type="ChEBI" id="CHEBI:29035"/>
    </ligand>
</feature>
<feature type="non-terminal residue">
    <location>
        <position position="1"/>
    </location>
</feature>
<feature type="non-terminal residue">
    <location>
        <position position="144"/>
    </location>
</feature>
<keyword id="KW-0464">Manganese</keyword>
<keyword id="KW-0479">Metal-binding</keyword>
<keyword id="KW-0496">Mitochondrion</keyword>
<keyword id="KW-0560">Oxidoreductase</keyword>